<dbReference type="EC" id="2.1.2.9" evidence="1"/>
<dbReference type="EMBL" id="BA000035">
    <property type="protein sequence ID" value="BAC18529.1"/>
    <property type="molecule type" value="Genomic_DNA"/>
</dbReference>
<dbReference type="RefSeq" id="WP_006767719.1">
    <property type="nucleotide sequence ID" value="NC_004369.1"/>
</dbReference>
<dbReference type="SMR" id="Q8FT52"/>
<dbReference type="STRING" id="196164.gene:10742140"/>
<dbReference type="KEGG" id="cef:CE1719"/>
<dbReference type="eggNOG" id="COG0223">
    <property type="taxonomic scope" value="Bacteria"/>
</dbReference>
<dbReference type="HOGENOM" id="CLU_033347_1_0_11"/>
<dbReference type="OrthoDB" id="9802815at2"/>
<dbReference type="Proteomes" id="UP000001409">
    <property type="component" value="Chromosome"/>
</dbReference>
<dbReference type="GO" id="GO:0005829">
    <property type="term" value="C:cytosol"/>
    <property type="evidence" value="ECO:0007669"/>
    <property type="project" value="TreeGrafter"/>
</dbReference>
<dbReference type="GO" id="GO:0004479">
    <property type="term" value="F:methionyl-tRNA formyltransferase activity"/>
    <property type="evidence" value="ECO:0007669"/>
    <property type="project" value="UniProtKB-UniRule"/>
</dbReference>
<dbReference type="CDD" id="cd08646">
    <property type="entry name" value="FMT_core_Met-tRNA-FMT_N"/>
    <property type="match status" value="1"/>
</dbReference>
<dbReference type="CDD" id="cd08704">
    <property type="entry name" value="Met_tRNA_FMT_C"/>
    <property type="match status" value="1"/>
</dbReference>
<dbReference type="FunFam" id="3.40.50.12230:FF:000001">
    <property type="entry name" value="Methionyl-tRNA formyltransferase"/>
    <property type="match status" value="1"/>
</dbReference>
<dbReference type="Gene3D" id="3.40.50.12230">
    <property type="match status" value="1"/>
</dbReference>
<dbReference type="HAMAP" id="MF_00182">
    <property type="entry name" value="Formyl_trans"/>
    <property type="match status" value="1"/>
</dbReference>
<dbReference type="InterPro" id="IPR005794">
    <property type="entry name" value="Fmt"/>
</dbReference>
<dbReference type="InterPro" id="IPR005793">
    <property type="entry name" value="Formyl_trans_C"/>
</dbReference>
<dbReference type="InterPro" id="IPR002376">
    <property type="entry name" value="Formyl_transf_N"/>
</dbReference>
<dbReference type="InterPro" id="IPR036477">
    <property type="entry name" value="Formyl_transf_N_sf"/>
</dbReference>
<dbReference type="InterPro" id="IPR011034">
    <property type="entry name" value="Formyl_transferase-like_C_sf"/>
</dbReference>
<dbReference type="InterPro" id="IPR044135">
    <property type="entry name" value="Met-tRNA-FMT_C"/>
</dbReference>
<dbReference type="InterPro" id="IPR041711">
    <property type="entry name" value="Met-tRNA-FMT_N"/>
</dbReference>
<dbReference type="NCBIfam" id="TIGR00460">
    <property type="entry name" value="fmt"/>
    <property type="match status" value="1"/>
</dbReference>
<dbReference type="PANTHER" id="PTHR11138">
    <property type="entry name" value="METHIONYL-TRNA FORMYLTRANSFERASE"/>
    <property type="match status" value="1"/>
</dbReference>
<dbReference type="PANTHER" id="PTHR11138:SF5">
    <property type="entry name" value="METHIONYL-TRNA FORMYLTRANSFERASE, MITOCHONDRIAL"/>
    <property type="match status" value="1"/>
</dbReference>
<dbReference type="Pfam" id="PF02911">
    <property type="entry name" value="Formyl_trans_C"/>
    <property type="match status" value="1"/>
</dbReference>
<dbReference type="Pfam" id="PF00551">
    <property type="entry name" value="Formyl_trans_N"/>
    <property type="match status" value="1"/>
</dbReference>
<dbReference type="SUPFAM" id="SSF50486">
    <property type="entry name" value="FMT C-terminal domain-like"/>
    <property type="match status" value="1"/>
</dbReference>
<dbReference type="SUPFAM" id="SSF53328">
    <property type="entry name" value="Formyltransferase"/>
    <property type="match status" value="1"/>
</dbReference>
<comment type="function">
    <text evidence="1">Attaches a formyl group to the free amino group of methionyl-tRNA(fMet). The formyl group appears to play a dual role in the initiator identity of N-formylmethionyl-tRNA by promoting its recognition by IF2 and preventing the misappropriation of this tRNA by the elongation apparatus.</text>
</comment>
<comment type="catalytic activity">
    <reaction evidence="1">
        <text>L-methionyl-tRNA(fMet) + (6R)-10-formyltetrahydrofolate = N-formyl-L-methionyl-tRNA(fMet) + (6S)-5,6,7,8-tetrahydrofolate + H(+)</text>
        <dbReference type="Rhea" id="RHEA:24380"/>
        <dbReference type="Rhea" id="RHEA-COMP:9952"/>
        <dbReference type="Rhea" id="RHEA-COMP:9953"/>
        <dbReference type="ChEBI" id="CHEBI:15378"/>
        <dbReference type="ChEBI" id="CHEBI:57453"/>
        <dbReference type="ChEBI" id="CHEBI:78530"/>
        <dbReference type="ChEBI" id="CHEBI:78844"/>
        <dbReference type="ChEBI" id="CHEBI:195366"/>
        <dbReference type="EC" id="2.1.2.9"/>
    </reaction>
</comment>
<comment type="similarity">
    <text evidence="1">Belongs to the Fmt family.</text>
</comment>
<gene>
    <name evidence="1" type="primary">fmt</name>
    <name type="ordered locus">CE1719</name>
</gene>
<accession>Q8FT52</accession>
<name>FMT_COREF</name>
<sequence length="315" mass="33625">MRLVFAGTPEPAVVALQKLIDSEHEVVAVLTQPDARRGRGRTLHPSAVAELAQAHGIEVIKPTSLKADTGDGRLVRQRLAELQPDCLPVVAFGQLITRDLLDVAPHGWVNLHFSLLPAWRGAAPVQAAIRAGDQLTGATCFRIDEGLDTGVILSTLEETIQPTDTADDLLTRLAYAGADLLVDTMTGLEAGTISPREQTGEATYAPKITTVDARIDWTVPAEVIDRHIRAHTPGPGAWTMLDDARLKVGPLVTVTDLPDVPTLNPGALHATRDAVYVGTGSTPVALGQIQPPGKKMMNAADWARGVHLDQEASFE</sequence>
<protein>
    <recommendedName>
        <fullName evidence="1">Methionyl-tRNA formyltransferase</fullName>
        <ecNumber evidence="1">2.1.2.9</ecNumber>
    </recommendedName>
</protein>
<proteinExistence type="inferred from homology"/>
<feature type="chain" id="PRO_0000082953" description="Methionyl-tRNA formyltransferase">
    <location>
        <begin position="1"/>
        <end position="315"/>
    </location>
</feature>
<feature type="binding site" evidence="1">
    <location>
        <begin position="114"/>
        <end position="117"/>
    </location>
    <ligand>
        <name>(6S)-5,6,7,8-tetrahydrofolate</name>
        <dbReference type="ChEBI" id="CHEBI:57453"/>
    </ligand>
</feature>
<evidence type="ECO:0000255" key="1">
    <source>
        <dbReference type="HAMAP-Rule" id="MF_00182"/>
    </source>
</evidence>
<reference key="1">
    <citation type="journal article" date="2003" name="Genome Res.">
        <title>Comparative complete genome sequence analysis of the amino acid replacements responsible for the thermostability of Corynebacterium efficiens.</title>
        <authorList>
            <person name="Nishio Y."/>
            <person name="Nakamura Y."/>
            <person name="Kawarabayasi Y."/>
            <person name="Usuda Y."/>
            <person name="Kimura E."/>
            <person name="Sugimoto S."/>
            <person name="Matsui K."/>
            <person name="Yamagishi A."/>
            <person name="Kikuchi H."/>
            <person name="Ikeo K."/>
            <person name="Gojobori T."/>
        </authorList>
    </citation>
    <scope>NUCLEOTIDE SEQUENCE [LARGE SCALE GENOMIC DNA]</scope>
    <source>
        <strain>DSM 44549 / YS-314 / AJ 12310 / JCM 11189 / NBRC 100395</strain>
    </source>
</reference>
<organism>
    <name type="scientific">Corynebacterium efficiens (strain DSM 44549 / YS-314 / AJ 12310 / JCM 11189 / NBRC 100395)</name>
    <dbReference type="NCBI Taxonomy" id="196164"/>
    <lineage>
        <taxon>Bacteria</taxon>
        <taxon>Bacillati</taxon>
        <taxon>Actinomycetota</taxon>
        <taxon>Actinomycetes</taxon>
        <taxon>Mycobacteriales</taxon>
        <taxon>Corynebacteriaceae</taxon>
        <taxon>Corynebacterium</taxon>
    </lineage>
</organism>
<keyword id="KW-0648">Protein biosynthesis</keyword>
<keyword id="KW-1185">Reference proteome</keyword>
<keyword id="KW-0808">Transferase</keyword>